<comment type="function">
    <text evidence="1">Involved in allosteric regulation of aspartate carbamoyltransferase.</text>
</comment>
<comment type="cofactor">
    <cofactor evidence="1">
        <name>Zn(2+)</name>
        <dbReference type="ChEBI" id="CHEBI:29105"/>
    </cofactor>
    <text evidence="1">Binds 1 zinc ion per subunit.</text>
</comment>
<comment type="subunit">
    <text evidence="1">Contains catalytic and regulatory chains.</text>
</comment>
<comment type="similarity">
    <text evidence="1">Belongs to the PyrI family.</text>
</comment>
<proteinExistence type="inferred from homology"/>
<keyword id="KW-0479">Metal-binding</keyword>
<keyword id="KW-0665">Pyrimidine biosynthesis</keyword>
<keyword id="KW-0862">Zinc</keyword>
<organism>
    <name type="scientific">Shigella boydii serotype 4 (strain Sb227)</name>
    <dbReference type="NCBI Taxonomy" id="300268"/>
    <lineage>
        <taxon>Bacteria</taxon>
        <taxon>Pseudomonadati</taxon>
        <taxon>Pseudomonadota</taxon>
        <taxon>Gammaproteobacteria</taxon>
        <taxon>Enterobacterales</taxon>
        <taxon>Enterobacteriaceae</taxon>
        <taxon>Shigella</taxon>
    </lineage>
</organism>
<accession>Q31TI0</accession>
<gene>
    <name evidence="1" type="primary">pyrI</name>
    <name type="ordered locus">SBO_4202</name>
</gene>
<sequence length="153" mass="17121">MTHDNKLQVEAIKRGTVIDHIPAQIGFKLLSLFKLTETDQRITIGLNLPSGEMGRKDLIKIENTFLSEDQVDQLALYAPQATVNRIDNYEVVGKSRPSLPERIDNVLVCPNSNCISHAEPVSSSFAVRKRANDIALKCKYCEKEFSHNVVLAN</sequence>
<feature type="chain" id="PRO_1000000048" description="Aspartate carbamoyltransferase regulatory chain">
    <location>
        <begin position="1"/>
        <end position="153"/>
    </location>
</feature>
<feature type="binding site" evidence="1">
    <location>
        <position position="109"/>
    </location>
    <ligand>
        <name>Zn(2+)</name>
        <dbReference type="ChEBI" id="CHEBI:29105"/>
    </ligand>
</feature>
<feature type="binding site" evidence="1">
    <location>
        <position position="114"/>
    </location>
    <ligand>
        <name>Zn(2+)</name>
        <dbReference type="ChEBI" id="CHEBI:29105"/>
    </ligand>
</feature>
<feature type="binding site" evidence="1">
    <location>
        <position position="138"/>
    </location>
    <ligand>
        <name>Zn(2+)</name>
        <dbReference type="ChEBI" id="CHEBI:29105"/>
    </ligand>
</feature>
<feature type="binding site" evidence="1">
    <location>
        <position position="141"/>
    </location>
    <ligand>
        <name>Zn(2+)</name>
        <dbReference type="ChEBI" id="CHEBI:29105"/>
    </ligand>
</feature>
<name>PYRI_SHIBS</name>
<protein>
    <recommendedName>
        <fullName evidence="1">Aspartate carbamoyltransferase regulatory chain</fullName>
    </recommendedName>
</protein>
<reference key="1">
    <citation type="journal article" date="2005" name="Nucleic Acids Res.">
        <title>Genome dynamics and diversity of Shigella species, the etiologic agents of bacillary dysentery.</title>
        <authorList>
            <person name="Yang F."/>
            <person name="Yang J."/>
            <person name="Zhang X."/>
            <person name="Chen L."/>
            <person name="Jiang Y."/>
            <person name="Yan Y."/>
            <person name="Tang X."/>
            <person name="Wang J."/>
            <person name="Xiong Z."/>
            <person name="Dong J."/>
            <person name="Xue Y."/>
            <person name="Zhu Y."/>
            <person name="Xu X."/>
            <person name="Sun L."/>
            <person name="Chen S."/>
            <person name="Nie H."/>
            <person name="Peng J."/>
            <person name="Xu J."/>
            <person name="Wang Y."/>
            <person name="Yuan Z."/>
            <person name="Wen Y."/>
            <person name="Yao Z."/>
            <person name="Shen Y."/>
            <person name="Qiang B."/>
            <person name="Hou Y."/>
            <person name="Yu J."/>
            <person name="Jin Q."/>
        </authorList>
    </citation>
    <scope>NUCLEOTIDE SEQUENCE [LARGE SCALE GENOMIC DNA]</scope>
    <source>
        <strain>Sb227</strain>
    </source>
</reference>
<dbReference type="EMBL" id="CP000036">
    <property type="protein sequence ID" value="ABB68628.1"/>
    <property type="molecule type" value="Genomic_DNA"/>
</dbReference>
<dbReference type="RefSeq" id="WP_000148581.1">
    <property type="nucleotide sequence ID" value="NC_007613.1"/>
</dbReference>
<dbReference type="SMR" id="Q31TI0"/>
<dbReference type="GeneID" id="93777580"/>
<dbReference type="KEGG" id="sbo:SBO_4202"/>
<dbReference type="HOGENOM" id="CLU_128576_0_0_6"/>
<dbReference type="Proteomes" id="UP000007067">
    <property type="component" value="Chromosome"/>
</dbReference>
<dbReference type="GO" id="GO:0009347">
    <property type="term" value="C:aspartate carbamoyltransferase complex"/>
    <property type="evidence" value="ECO:0007669"/>
    <property type="project" value="InterPro"/>
</dbReference>
<dbReference type="GO" id="GO:0046872">
    <property type="term" value="F:metal ion binding"/>
    <property type="evidence" value="ECO:0007669"/>
    <property type="project" value="UniProtKB-KW"/>
</dbReference>
<dbReference type="GO" id="GO:0006207">
    <property type="term" value="P:'de novo' pyrimidine nucleobase biosynthetic process"/>
    <property type="evidence" value="ECO:0007669"/>
    <property type="project" value="InterPro"/>
</dbReference>
<dbReference type="GO" id="GO:0006221">
    <property type="term" value="P:pyrimidine nucleotide biosynthetic process"/>
    <property type="evidence" value="ECO:0007669"/>
    <property type="project" value="UniProtKB-UniRule"/>
</dbReference>
<dbReference type="FunFam" id="2.30.30.20:FF:000001">
    <property type="entry name" value="Aspartate carbamoyltransferase regulatory chain"/>
    <property type="match status" value="1"/>
</dbReference>
<dbReference type="FunFam" id="3.30.70.140:FF:000001">
    <property type="entry name" value="Aspartate carbamoyltransferase regulatory chain"/>
    <property type="match status" value="1"/>
</dbReference>
<dbReference type="Gene3D" id="2.30.30.20">
    <property type="entry name" value="Aspartate carbamoyltransferase regulatory subunit, C-terminal domain"/>
    <property type="match status" value="1"/>
</dbReference>
<dbReference type="Gene3D" id="3.30.70.140">
    <property type="entry name" value="Aspartate carbamoyltransferase regulatory subunit, N-terminal domain"/>
    <property type="match status" value="1"/>
</dbReference>
<dbReference type="HAMAP" id="MF_00002">
    <property type="entry name" value="Asp_carb_tr_reg"/>
    <property type="match status" value="1"/>
</dbReference>
<dbReference type="InterPro" id="IPR020545">
    <property type="entry name" value="Asp_carbamoyltransf_reg_N"/>
</dbReference>
<dbReference type="InterPro" id="IPR002801">
    <property type="entry name" value="Asp_carbamoylTrfase_reg"/>
</dbReference>
<dbReference type="InterPro" id="IPR020542">
    <property type="entry name" value="Asp_carbamoyltrfase_reg_C"/>
</dbReference>
<dbReference type="InterPro" id="IPR036792">
    <property type="entry name" value="Asp_carbatrfase_reg_C_sf"/>
</dbReference>
<dbReference type="InterPro" id="IPR036793">
    <property type="entry name" value="Asp_carbatrfase_reg_N_sf"/>
</dbReference>
<dbReference type="NCBIfam" id="TIGR00240">
    <property type="entry name" value="ATCase_reg"/>
    <property type="match status" value="1"/>
</dbReference>
<dbReference type="PANTHER" id="PTHR35805">
    <property type="entry name" value="ASPARTATE CARBAMOYLTRANSFERASE REGULATORY CHAIN"/>
    <property type="match status" value="1"/>
</dbReference>
<dbReference type="PANTHER" id="PTHR35805:SF1">
    <property type="entry name" value="ASPARTATE CARBAMOYLTRANSFERASE REGULATORY CHAIN"/>
    <property type="match status" value="1"/>
</dbReference>
<dbReference type="Pfam" id="PF01948">
    <property type="entry name" value="PyrI"/>
    <property type="match status" value="1"/>
</dbReference>
<dbReference type="Pfam" id="PF02748">
    <property type="entry name" value="PyrI_C"/>
    <property type="match status" value="1"/>
</dbReference>
<dbReference type="SUPFAM" id="SSF57825">
    <property type="entry name" value="Aspartate carbamoyltransferase, Regulatory-chain, C-terminal domain"/>
    <property type="match status" value="1"/>
</dbReference>
<dbReference type="SUPFAM" id="SSF54893">
    <property type="entry name" value="Aspartate carbamoyltransferase, Regulatory-chain, N-terminal domain"/>
    <property type="match status" value="1"/>
</dbReference>
<evidence type="ECO:0000255" key="1">
    <source>
        <dbReference type="HAMAP-Rule" id="MF_00002"/>
    </source>
</evidence>